<reference key="1">
    <citation type="journal article" date="2009" name="Proc. Natl. Acad. Sci. U.S.A.">
        <title>Hamiltonella defensa, genome evolution of protective bacterial endosymbiont from pathogenic ancestors.</title>
        <authorList>
            <person name="Degnan P.H."/>
            <person name="Yu Y."/>
            <person name="Sisneros N."/>
            <person name="Wing R.A."/>
            <person name="Moran N.A."/>
        </authorList>
    </citation>
    <scope>NUCLEOTIDE SEQUENCE [LARGE SCALE GENOMIC DNA]</scope>
    <source>
        <strain>5AT</strain>
    </source>
</reference>
<evidence type="ECO:0000255" key="1">
    <source>
        <dbReference type="HAMAP-Rule" id="MF_00174"/>
    </source>
</evidence>
<comment type="function">
    <text evidence="1">With EpmB is involved in the beta-lysylation step of the post-translational modification of translation elongation factor P (EF-P). Catalyzes the ATP-dependent activation of (R)-beta-lysine produced by EpmB, forming a lysyl-adenylate, from which the beta-lysyl moiety is then transferred to the epsilon-amino group of a conserved specific lysine residue in EF-P.</text>
</comment>
<comment type="catalytic activity">
    <reaction evidence="1">
        <text>D-beta-lysine + L-lysyl-[protein] + ATP = N(6)-((3R)-3,6-diaminohexanoyl)-L-lysyl-[protein] + AMP + diphosphate + H(+)</text>
        <dbReference type="Rhea" id="RHEA:83435"/>
        <dbReference type="Rhea" id="RHEA-COMP:9752"/>
        <dbReference type="Rhea" id="RHEA-COMP:20131"/>
        <dbReference type="ChEBI" id="CHEBI:15378"/>
        <dbReference type="ChEBI" id="CHEBI:29969"/>
        <dbReference type="ChEBI" id="CHEBI:30616"/>
        <dbReference type="ChEBI" id="CHEBI:33019"/>
        <dbReference type="ChEBI" id="CHEBI:84138"/>
        <dbReference type="ChEBI" id="CHEBI:156053"/>
        <dbReference type="ChEBI" id="CHEBI:456215"/>
    </reaction>
    <physiologicalReaction direction="left-to-right" evidence="1">
        <dbReference type="Rhea" id="RHEA:83436"/>
    </physiologicalReaction>
</comment>
<comment type="subunit">
    <text evidence="1">Homodimer.</text>
</comment>
<comment type="similarity">
    <text evidence="1">Belongs to the class-II aminoacyl-tRNA synthetase family. EpmA subfamily.</text>
</comment>
<organism>
    <name type="scientific">Hamiltonella defensa subsp. Acyrthosiphon pisum (strain 5AT)</name>
    <dbReference type="NCBI Taxonomy" id="572265"/>
    <lineage>
        <taxon>Bacteria</taxon>
        <taxon>Pseudomonadati</taxon>
        <taxon>Pseudomonadota</taxon>
        <taxon>Gammaproteobacteria</taxon>
        <taxon>Enterobacterales</taxon>
        <taxon>Enterobacteriaceae</taxon>
        <taxon>aphid secondary symbionts</taxon>
        <taxon>Candidatus Hamiltonella</taxon>
    </lineage>
</organism>
<keyword id="KW-0067">ATP-binding</keyword>
<keyword id="KW-0436">Ligase</keyword>
<keyword id="KW-0547">Nucleotide-binding</keyword>
<sequence length="325" mass="37142">MSEAANWQPSAPISNLLKRADMIKKIRQFFTDRGVLEVDTPCMSQATVTDVHLSTFETRFLAPTMAKSLSLYMTTSPEYHMKRLLAAGSGPIYQMGRCFRNEEMGRYHNPEFTLLEWYRPHYDMYRLMDEVDDLLQQILTCHSAETLSYQQAFLRHLNIDPLSADETQIKEAAVRLNLASITDNEKDRDTFLQLLFMAGVEPYIGRDKPVFIYHFPASQAALASISTEDYRVAERFEVYFKGIELANGFYELTDSAEQQQRFEQDNRQRAALGLPKRSIDERFIAALKHGLPPCSGVALGIDRLVMLSVNAENLSEVMAFPVERA</sequence>
<accession>C4K3U1</accession>
<protein>
    <recommendedName>
        <fullName evidence="1">Elongation factor P--(R)-beta-lysine ligase</fullName>
        <shortName evidence="1">EF-P--(R)-beta-lysine ligase</shortName>
        <ecNumber evidence="1">6.3.2.-</ecNumber>
    </recommendedName>
    <alternativeName>
        <fullName evidence="1">EF-P post-translational modification enzyme A</fullName>
    </alternativeName>
    <alternativeName>
        <fullName evidence="1">EF-P-lysine lysyltransferase</fullName>
    </alternativeName>
</protein>
<feature type="chain" id="PRO_1000203724" description="Elongation factor P--(R)-beta-lysine ligase">
    <location>
        <begin position="1"/>
        <end position="325"/>
    </location>
</feature>
<feature type="binding site" evidence="1">
    <location>
        <begin position="76"/>
        <end position="78"/>
    </location>
    <ligand>
        <name>substrate</name>
    </ligand>
</feature>
<feature type="binding site" evidence="1">
    <location>
        <begin position="100"/>
        <end position="102"/>
    </location>
    <ligand>
        <name>ATP</name>
        <dbReference type="ChEBI" id="CHEBI:30616"/>
    </ligand>
</feature>
<feature type="binding site" evidence="1">
    <location>
        <position position="109"/>
    </location>
    <ligand>
        <name>ATP</name>
        <dbReference type="ChEBI" id="CHEBI:30616"/>
    </ligand>
</feature>
<feature type="binding site" evidence="1">
    <location>
        <position position="118"/>
    </location>
    <ligand>
        <name>substrate</name>
    </ligand>
</feature>
<feature type="binding site" evidence="1">
    <location>
        <begin position="244"/>
        <end position="245"/>
    </location>
    <ligand>
        <name>ATP</name>
        <dbReference type="ChEBI" id="CHEBI:30616"/>
    </ligand>
</feature>
<feature type="binding site" evidence="1">
    <location>
        <position position="251"/>
    </location>
    <ligand>
        <name>substrate</name>
    </ligand>
</feature>
<feature type="binding site" evidence="1">
    <location>
        <position position="300"/>
    </location>
    <ligand>
        <name>ATP</name>
        <dbReference type="ChEBI" id="CHEBI:30616"/>
    </ligand>
</feature>
<proteinExistence type="inferred from homology"/>
<name>EPMA_HAMD5</name>
<gene>
    <name evidence="1" type="primary">epmA</name>
    <name type="synonym">yjeA</name>
    <name type="ordered locus">HDEF_0480</name>
</gene>
<dbReference type="EC" id="6.3.2.-" evidence="1"/>
<dbReference type="EMBL" id="CP001277">
    <property type="protein sequence ID" value="ACQ67234.1"/>
    <property type="molecule type" value="Genomic_DNA"/>
</dbReference>
<dbReference type="RefSeq" id="WP_012738191.1">
    <property type="nucleotide sequence ID" value="NC_012751.1"/>
</dbReference>
<dbReference type="SMR" id="C4K3U1"/>
<dbReference type="STRING" id="572265.HDEF_0480"/>
<dbReference type="GeneID" id="66260371"/>
<dbReference type="KEGG" id="hde:HDEF_0480"/>
<dbReference type="eggNOG" id="COG2269">
    <property type="taxonomic scope" value="Bacteria"/>
</dbReference>
<dbReference type="HOGENOM" id="CLU_008255_1_1_6"/>
<dbReference type="Proteomes" id="UP000002334">
    <property type="component" value="Chromosome"/>
</dbReference>
<dbReference type="GO" id="GO:0005829">
    <property type="term" value="C:cytosol"/>
    <property type="evidence" value="ECO:0007669"/>
    <property type="project" value="TreeGrafter"/>
</dbReference>
<dbReference type="GO" id="GO:0016880">
    <property type="term" value="F:acid-ammonia (or amide) ligase activity"/>
    <property type="evidence" value="ECO:0007669"/>
    <property type="project" value="UniProtKB-UniRule"/>
</dbReference>
<dbReference type="GO" id="GO:0005524">
    <property type="term" value="F:ATP binding"/>
    <property type="evidence" value="ECO:0007669"/>
    <property type="project" value="UniProtKB-UniRule"/>
</dbReference>
<dbReference type="GO" id="GO:0004824">
    <property type="term" value="F:lysine-tRNA ligase activity"/>
    <property type="evidence" value="ECO:0007669"/>
    <property type="project" value="InterPro"/>
</dbReference>
<dbReference type="GO" id="GO:0000049">
    <property type="term" value="F:tRNA binding"/>
    <property type="evidence" value="ECO:0007669"/>
    <property type="project" value="TreeGrafter"/>
</dbReference>
<dbReference type="GO" id="GO:0006430">
    <property type="term" value="P:lysyl-tRNA aminoacylation"/>
    <property type="evidence" value="ECO:0007669"/>
    <property type="project" value="InterPro"/>
</dbReference>
<dbReference type="FunFam" id="3.30.930.10:FF:000017">
    <property type="entry name" value="Elongation factor P--(R)-beta-lysine ligase"/>
    <property type="match status" value="1"/>
</dbReference>
<dbReference type="Gene3D" id="3.30.930.10">
    <property type="entry name" value="Bira Bifunctional Protein, Domain 2"/>
    <property type="match status" value="1"/>
</dbReference>
<dbReference type="HAMAP" id="MF_00174">
    <property type="entry name" value="EF_P_modif_A"/>
    <property type="match status" value="1"/>
</dbReference>
<dbReference type="InterPro" id="IPR004364">
    <property type="entry name" value="Aa-tRNA-synt_II"/>
</dbReference>
<dbReference type="InterPro" id="IPR006195">
    <property type="entry name" value="aa-tRNA-synth_II"/>
</dbReference>
<dbReference type="InterPro" id="IPR045864">
    <property type="entry name" value="aa-tRNA-synth_II/BPL/LPL"/>
</dbReference>
<dbReference type="InterPro" id="IPR004525">
    <property type="entry name" value="EpmA"/>
</dbReference>
<dbReference type="InterPro" id="IPR018149">
    <property type="entry name" value="Lys-tRNA-synth_II_C"/>
</dbReference>
<dbReference type="NCBIfam" id="TIGR00462">
    <property type="entry name" value="genX"/>
    <property type="match status" value="1"/>
</dbReference>
<dbReference type="NCBIfam" id="NF006828">
    <property type="entry name" value="PRK09350.1"/>
    <property type="match status" value="1"/>
</dbReference>
<dbReference type="PANTHER" id="PTHR42918:SF6">
    <property type="entry name" value="ELONGATION FACTOR P--(R)-BETA-LYSINE LIGASE"/>
    <property type="match status" value="1"/>
</dbReference>
<dbReference type="PANTHER" id="PTHR42918">
    <property type="entry name" value="LYSYL-TRNA SYNTHETASE"/>
    <property type="match status" value="1"/>
</dbReference>
<dbReference type="Pfam" id="PF00152">
    <property type="entry name" value="tRNA-synt_2"/>
    <property type="match status" value="1"/>
</dbReference>
<dbReference type="PRINTS" id="PR00982">
    <property type="entry name" value="TRNASYNTHLYS"/>
</dbReference>
<dbReference type="SUPFAM" id="SSF55681">
    <property type="entry name" value="Class II aaRS and biotin synthetases"/>
    <property type="match status" value="1"/>
</dbReference>
<dbReference type="PROSITE" id="PS50862">
    <property type="entry name" value="AA_TRNA_LIGASE_II"/>
    <property type="match status" value="1"/>
</dbReference>